<name>Y4034_BACAA</name>
<feature type="chain" id="PRO_1000185009" description="Putative regulatory protein BAA_4034">
    <location>
        <begin position="1"/>
        <end position="87"/>
    </location>
</feature>
<gene>
    <name type="ordered locus">BAA_4034</name>
</gene>
<accession>C3P643</accession>
<sequence length="87" mass="9647">MAMRFLNIGYGNIVSAHRIIAIVSPESAPIKRTVQEAREHNALLDATYGRKTRAVIVMDDGHVVLSPIQPETIAHRLNNKEDLSEEG</sequence>
<protein>
    <recommendedName>
        <fullName evidence="1">Putative regulatory protein BAA_4034</fullName>
    </recommendedName>
</protein>
<evidence type="ECO:0000255" key="1">
    <source>
        <dbReference type="HAMAP-Rule" id="MF_01503"/>
    </source>
</evidence>
<organism>
    <name type="scientific">Bacillus anthracis (strain A0248)</name>
    <dbReference type="NCBI Taxonomy" id="592021"/>
    <lineage>
        <taxon>Bacteria</taxon>
        <taxon>Bacillati</taxon>
        <taxon>Bacillota</taxon>
        <taxon>Bacilli</taxon>
        <taxon>Bacillales</taxon>
        <taxon>Bacillaceae</taxon>
        <taxon>Bacillus</taxon>
        <taxon>Bacillus cereus group</taxon>
    </lineage>
</organism>
<reference key="1">
    <citation type="submission" date="2009-04" db="EMBL/GenBank/DDBJ databases">
        <title>Genome sequence of Bacillus anthracis A0248.</title>
        <authorList>
            <person name="Dodson R.J."/>
            <person name="Munk A.C."/>
            <person name="Bruce D."/>
            <person name="Detter C."/>
            <person name="Tapia R."/>
            <person name="Sutton G."/>
            <person name="Sims D."/>
            <person name="Brettin T."/>
        </authorList>
    </citation>
    <scope>NUCLEOTIDE SEQUENCE [LARGE SCALE GENOMIC DNA]</scope>
    <source>
        <strain>A0248</strain>
    </source>
</reference>
<proteinExistence type="inferred from homology"/>
<dbReference type="EMBL" id="CP001598">
    <property type="protein sequence ID" value="ACQ46602.1"/>
    <property type="molecule type" value="Genomic_DNA"/>
</dbReference>
<dbReference type="SMR" id="C3P643"/>
<dbReference type="KEGG" id="bai:BAA_4034"/>
<dbReference type="HOGENOM" id="CLU_165326_0_0_9"/>
<dbReference type="HAMAP" id="MF_01503">
    <property type="entry name" value="RemA"/>
    <property type="match status" value="1"/>
</dbReference>
<dbReference type="InterPro" id="IPR007169">
    <property type="entry name" value="RemA-like"/>
</dbReference>
<dbReference type="NCBIfam" id="NF046064">
    <property type="entry name" value="MtxBflmRegRemA"/>
    <property type="match status" value="1"/>
</dbReference>
<dbReference type="NCBIfam" id="NF003315">
    <property type="entry name" value="PRK04323.1"/>
    <property type="match status" value="1"/>
</dbReference>
<dbReference type="PANTHER" id="PTHR38449:SF1">
    <property type="entry name" value="REGULATORY PROTEIN SSL2874-RELATED"/>
    <property type="match status" value="1"/>
</dbReference>
<dbReference type="PANTHER" id="PTHR38449">
    <property type="entry name" value="REGULATORY PROTEIN TM_1690-RELATED"/>
    <property type="match status" value="1"/>
</dbReference>
<dbReference type="Pfam" id="PF04025">
    <property type="entry name" value="RemA-like"/>
    <property type="match status" value="1"/>
</dbReference>
<comment type="similarity">
    <text evidence="1">Belongs to the RemA family.</text>
</comment>